<reference key="1">
    <citation type="journal article" date="2004" name="Proc. Natl. Acad. Sci. U.S.A.">
        <title>H5N1 influenza: a protean pandemic threat.</title>
        <authorList>
            <person name="Guan Y."/>
            <person name="Poon L.L.M."/>
            <person name="Cheung C.Y."/>
            <person name="Ellis T.M."/>
            <person name="Lim W."/>
            <person name="Lipatov A.S."/>
            <person name="Chan K.H."/>
            <person name="Sturm-Ramirez K.M."/>
            <person name="Cheung C.L."/>
            <person name="Leung Y.H.C."/>
            <person name="Yuen K.Y."/>
            <person name="Webster R.G."/>
            <person name="Peiris J.S.M."/>
        </authorList>
    </citation>
    <scope>NUCLEOTIDE SEQUENCE [GENOMIC RNA]</scope>
</reference>
<gene>
    <name evidence="1" type="primary">M</name>
</gene>
<proteinExistence type="inferred from homology"/>
<organismHost>
    <name type="scientific">Aves</name>
    <dbReference type="NCBI Taxonomy" id="8782"/>
</organismHost>
<organismHost>
    <name type="scientific">Felis catus</name>
    <name type="common">Cat</name>
    <name type="synonym">Felis silvestris catus</name>
    <dbReference type="NCBI Taxonomy" id="9685"/>
</organismHost>
<organismHost>
    <name type="scientific">Homo sapiens</name>
    <name type="common">Human</name>
    <dbReference type="NCBI Taxonomy" id="9606"/>
</organismHost>
<organismHost>
    <name type="scientific">Panthera pardus</name>
    <name type="common">Leopard</name>
    <name type="synonym">Felis pardus</name>
    <dbReference type="NCBI Taxonomy" id="9691"/>
</organismHost>
<organismHost>
    <name type="scientific">Panthera tigris</name>
    <name type="common">Tiger</name>
    <dbReference type="NCBI Taxonomy" id="9694"/>
</organismHost>
<organismHost>
    <name type="scientific">Sus scrofa</name>
    <name type="common">Pig</name>
    <dbReference type="NCBI Taxonomy" id="9823"/>
</organismHost>
<dbReference type="EMBL" id="AY575902">
    <property type="protein sequence ID" value="AAT39098.1"/>
    <property type="molecule type" value="Genomic_DNA"/>
</dbReference>
<dbReference type="SMR" id="Q6J8C3"/>
<dbReference type="GO" id="GO:0042025">
    <property type="term" value="C:host cell nucleus"/>
    <property type="evidence" value="ECO:0007669"/>
    <property type="project" value="UniProtKB-SubCell"/>
</dbReference>
<dbReference type="GO" id="GO:0016020">
    <property type="term" value="C:membrane"/>
    <property type="evidence" value="ECO:0007669"/>
    <property type="project" value="UniProtKB-KW"/>
</dbReference>
<dbReference type="GO" id="GO:0055036">
    <property type="term" value="C:virion membrane"/>
    <property type="evidence" value="ECO:0007669"/>
    <property type="project" value="UniProtKB-SubCell"/>
</dbReference>
<dbReference type="GO" id="GO:0003723">
    <property type="term" value="F:RNA binding"/>
    <property type="evidence" value="ECO:0007669"/>
    <property type="project" value="UniProtKB-UniRule"/>
</dbReference>
<dbReference type="GO" id="GO:0039660">
    <property type="term" value="F:structural constituent of virion"/>
    <property type="evidence" value="ECO:0007669"/>
    <property type="project" value="UniProtKB-UniRule"/>
</dbReference>
<dbReference type="GO" id="GO:0046761">
    <property type="term" value="P:viral budding from plasma membrane"/>
    <property type="evidence" value="ECO:0007669"/>
    <property type="project" value="UniProtKB-UniRule"/>
</dbReference>
<dbReference type="FunFam" id="1.10.10.180:FF:000001">
    <property type="entry name" value="Matrix protein 1"/>
    <property type="match status" value="1"/>
</dbReference>
<dbReference type="FunFam" id="1.20.91.10:FF:000001">
    <property type="entry name" value="Matrix protein 1"/>
    <property type="match status" value="1"/>
</dbReference>
<dbReference type="Gene3D" id="1.10.10.180">
    <property type="match status" value="1"/>
</dbReference>
<dbReference type="Gene3D" id="1.20.91.10">
    <property type="match status" value="1"/>
</dbReference>
<dbReference type="HAMAP" id="MF_04068">
    <property type="entry name" value="INFV_M1"/>
    <property type="match status" value="1"/>
</dbReference>
<dbReference type="InterPro" id="IPR036039">
    <property type="entry name" value="Flu_matrix_M1"/>
</dbReference>
<dbReference type="InterPro" id="IPR013188">
    <property type="entry name" value="Flu_matrix_M1_C"/>
</dbReference>
<dbReference type="InterPro" id="IPR001561">
    <property type="entry name" value="Flu_matrix_M1_N"/>
</dbReference>
<dbReference type="InterPro" id="IPR015423">
    <property type="entry name" value="Flu_matrix_M1_N_sub1"/>
</dbReference>
<dbReference type="InterPro" id="IPR015799">
    <property type="entry name" value="Flu_matrix_M1_N_sub2"/>
</dbReference>
<dbReference type="InterPro" id="IPR037533">
    <property type="entry name" value="INFV_M1"/>
</dbReference>
<dbReference type="Pfam" id="PF00598">
    <property type="entry name" value="Flu_M1"/>
    <property type="match status" value="1"/>
</dbReference>
<dbReference type="Pfam" id="PF08289">
    <property type="entry name" value="Flu_M1_C"/>
    <property type="match status" value="1"/>
</dbReference>
<dbReference type="SMART" id="SM00759">
    <property type="entry name" value="Flu_M1_C"/>
    <property type="match status" value="1"/>
</dbReference>
<dbReference type="SUPFAM" id="SSF48145">
    <property type="entry name" value="Influenza virus matrix protein M1"/>
    <property type="match status" value="1"/>
</dbReference>
<feature type="chain" id="PRO_0000311615" description="Matrix protein 1">
    <location>
        <begin position="1"/>
        <end position="252"/>
    </location>
</feature>
<feature type="region of interest" description="Membrane-binding" evidence="1">
    <location>
        <begin position="1"/>
        <end position="164"/>
    </location>
</feature>
<feature type="region of interest" description="RNP-binding" evidence="1">
    <location>
        <begin position="165"/>
        <end position="252"/>
    </location>
</feature>
<feature type="short sequence motif" description="Nuclear localization signal" evidence="1">
    <location>
        <begin position="101"/>
        <end position="105"/>
    </location>
</feature>
<accession>Q6J8C3</accession>
<name>M1_I02A5</name>
<organism>
    <name type="scientific">Influenza A virus (strain A/Chicken/Hong Kong/96.1/2002 H5N1 genotype Y)</name>
    <dbReference type="NCBI Taxonomy" id="279803"/>
    <lineage>
        <taxon>Viruses</taxon>
        <taxon>Riboviria</taxon>
        <taxon>Orthornavirae</taxon>
        <taxon>Negarnaviricota</taxon>
        <taxon>Polyploviricotina</taxon>
        <taxon>Insthoviricetes</taxon>
        <taxon>Articulavirales</taxon>
        <taxon>Orthomyxoviridae</taxon>
        <taxon>Alphainfluenzavirus</taxon>
        <taxon>Alphainfluenzavirus influenzae</taxon>
        <taxon>Influenza A virus</taxon>
    </lineage>
</organism>
<comment type="function">
    <text evidence="1">Plays critical roles in virus replication, from virus entry and uncoating to assembly and budding of the virus particle. M1 binding to ribonucleocapsids (RNPs) in nucleus seems to inhibit viral transcription. Interaction of viral NEP with M1-RNP is thought to promote nuclear export of the complex, which is targeted to the virion assembly site at the apical plasma membrane in polarized epithelial cells. Interactions with NA and HA may bring M1, a non-raft-associated protein, into lipid rafts. Forms a continuous shell on the inner side of the lipid bilayer in virion, where it binds the RNP. During virus entry into cell, the M2 ion channel acidifies the internal virion core, inducing M1 dissociation from the RNP. M1-free RNPs are transported to the nucleus, where viral transcription and replication can take place.</text>
</comment>
<comment type="function">
    <text evidence="1">Determines the virion's shape: spherical or filamentous. Clinical isolates of influenza are characterized by the presence of significant proportion of filamentous virions, whereas after multiple passage on eggs or cell culture, virions have only spherical morphology. Filamentous virions are thought to be important to infect neighboring cells, and spherical virions more suited to spread through aerosol between hosts organisms.</text>
</comment>
<comment type="subunit">
    <text evidence="1">Homodimer and homomultimer. Interacts with NEP. Binds ribonucleocapsid by both interacting with genomic RNA and NP protein. May interact with HA and NA. Cannot bind NP without genomic RNA.</text>
</comment>
<comment type="subcellular location">
    <subcellularLocation>
        <location evidence="1">Virion membrane</location>
        <topology evidence="1">Peripheral membrane protein</topology>
        <orientation evidence="1">Cytoplasmic side</orientation>
    </subcellularLocation>
    <subcellularLocation>
        <location evidence="1">Host nucleus</location>
    </subcellularLocation>
</comment>
<comment type="alternative products">
    <event type="alternative splicing"/>
    <isoform>
        <id>Q6J8C3-1</id>
        <name>M1</name>
        <sequence type="displayed"/>
    </isoform>
    <isoform>
        <id>P0C5T4-1</id>
        <name>M2</name>
        <sequence type="external"/>
    </isoform>
    <text>Only the first 9 residues are shared by the 2 isoforms.</text>
</comment>
<comment type="miscellaneous">
    <text evidence="1">Most abundant protein in virion. When expressed alone can form virus-like particles in transfected cells.</text>
</comment>
<comment type="similarity">
    <text evidence="1">Belongs to the influenza viruses Matrix protein M1 family.</text>
</comment>
<evidence type="ECO:0000255" key="1">
    <source>
        <dbReference type="HAMAP-Rule" id="MF_04068"/>
    </source>
</evidence>
<keyword id="KW-0025">Alternative splicing</keyword>
<keyword id="KW-1048">Host nucleus</keyword>
<keyword id="KW-0472">Membrane</keyword>
<keyword id="KW-0694">RNA-binding</keyword>
<keyword id="KW-0468">Viral matrix protein</keyword>
<keyword id="KW-0946">Virion</keyword>
<sequence length="252" mass="27951">MSLLTEVETYVLSIIPSGPLKAEIAQRLEDVFAGKNTDLEALMEWLKTRPILSPLTKGILGFVFTLTVPSERGLQRRRFVQNALNGNGDPNNMDRAVKLYKKLKREITFHGAKEVALSYSTGALASCMGLIYNRMGTVTTEAAFGLVCATCEQIADSQHRSHRQMTTTTNPLIRHENRMVLASTTAKAMEQMAGSSEQAAEAMEVANQARQMVQAMRTIGTHPNSSAGLRDNLLENLQAYQKRMGVQMQRFK</sequence>
<protein>
    <recommendedName>
        <fullName evidence="1">Matrix protein 1</fullName>
        <shortName evidence="1">M1</shortName>
    </recommendedName>
</protein>